<evidence type="ECO:0000255" key="1">
    <source>
        <dbReference type="HAMAP-Rule" id="MF_01309"/>
    </source>
</evidence>
<evidence type="ECO:0000305" key="2"/>
<sequence>MGQKVHPYSLRVKINKDWKSKWYFDKKLYSAILHEDFLIRREIMKFLKGIKFDISDIEIIRNNPQKVTVVIVTPRPGSVIGLKGSNLEKIGQLLTKKISKKISIKIKEVKRPELDAQIIANGIAKQVENRASYRKVLKSSLSTSMLKGAQGLKIKIAGRLGGAEIARSFEVKEGRVPLHTLRANIDYGFSEAQTTYGIIGVKVWLFKGEVLGRQTNSDAGQVINKKPFRERGDAVKNFDKTLNNREKANEKQTRLLDKKDGLSKDEVDLLNKKKFSASFSKERDDSNEQDIGG</sequence>
<comment type="function">
    <text evidence="1">Binds the lower part of the 30S subunit head. Binds mRNA in the 70S ribosome, positioning it for translation.</text>
</comment>
<comment type="subunit">
    <text evidence="1">Part of the 30S ribosomal subunit. Forms a tight complex with proteins S10 and S14.</text>
</comment>
<comment type="similarity">
    <text evidence="1">Belongs to the universal ribosomal protein uS3 family.</text>
</comment>
<reference key="1">
    <citation type="journal article" date="1997" name="Nature">
        <title>Genomic sequence of a Lyme disease spirochaete, Borrelia burgdorferi.</title>
        <authorList>
            <person name="Fraser C.M."/>
            <person name="Casjens S."/>
            <person name="Huang W.M."/>
            <person name="Sutton G.G."/>
            <person name="Clayton R.A."/>
            <person name="Lathigra R."/>
            <person name="White O."/>
            <person name="Ketchum K.A."/>
            <person name="Dodson R.J."/>
            <person name="Hickey E.K."/>
            <person name="Gwinn M.L."/>
            <person name="Dougherty B.A."/>
            <person name="Tomb J.-F."/>
            <person name="Fleischmann R.D."/>
            <person name="Richardson D.L."/>
            <person name="Peterson J.D."/>
            <person name="Kerlavage A.R."/>
            <person name="Quackenbush J."/>
            <person name="Salzberg S.L."/>
            <person name="Hanson M."/>
            <person name="van Vugt R."/>
            <person name="Palmer N."/>
            <person name="Adams M.D."/>
            <person name="Gocayne J.D."/>
            <person name="Weidman J.F."/>
            <person name="Utterback T.R."/>
            <person name="Watthey L."/>
            <person name="McDonald L.A."/>
            <person name="Artiach P."/>
            <person name="Bowman C."/>
            <person name="Garland S.A."/>
            <person name="Fujii C."/>
            <person name="Cotton M.D."/>
            <person name="Horst K."/>
            <person name="Roberts K.M."/>
            <person name="Hatch B."/>
            <person name="Smith H.O."/>
            <person name="Venter J.C."/>
        </authorList>
    </citation>
    <scope>NUCLEOTIDE SEQUENCE [LARGE SCALE GENOMIC DNA]</scope>
    <source>
        <strain>ATCC 35210 / DSM 4680 / CIP 102532 / B31</strain>
    </source>
</reference>
<reference key="2">
    <citation type="submission" date="1996-12" db="EMBL/GenBank/DDBJ databases">
        <authorList>
            <person name="Perlee L."/>
            <person name="Qi H."/>
            <person name="Schwartz I."/>
        </authorList>
    </citation>
    <scope>NUCLEOTIDE SEQUENCE [GENOMIC DNA] OF 1-93</scope>
    <source>
        <strain>ATCC 35210 / DSM 4680 / CIP 102532 / B31</strain>
    </source>
</reference>
<keyword id="KW-0002">3D-structure</keyword>
<keyword id="KW-1185">Reference proteome</keyword>
<keyword id="KW-0687">Ribonucleoprotein</keyword>
<keyword id="KW-0689">Ribosomal protein</keyword>
<keyword id="KW-0694">RNA-binding</keyword>
<keyword id="KW-0699">rRNA-binding</keyword>
<organism>
    <name type="scientific">Borreliella burgdorferi (strain ATCC 35210 / DSM 4680 / CIP 102532 / B31)</name>
    <name type="common">Borrelia burgdorferi</name>
    <dbReference type="NCBI Taxonomy" id="224326"/>
    <lineage>
        <taxon>Bacteria</taxon>
        <taxon>Pseudomonadati</taxon>
        <taxon>Spirochaetota</taxon>
        <taxon>Spirochaetia</taxon>
        <taxon>Spirochaetales</taxon>
        <taxon>Borreliaceae</taxon>
        <taxon>Borreliella</taxon>
    </lineage>
</organism>
<proteinExistence type="evidence at protein level"/>
<accession>P94273</accession>
<accession>O51437</accession>
<gene>
    <name evidence="1" type="primary">rpsC</name>
    <name type="ordered locus">BB_0484</name>
</gene>
<protein>
    <recommendedName>
        <fullName evidence="1">Small ribosomal subunit protein uS3</fullName>
    </recommendedName>
    <alternativeName>
        <fullName evidence="2">30S ribosomal protein S3</fullName>
    </alternativeName>
</protein>
<dbReference type="EMBL" id="AE000783">
    <property type="protein sequence ID" value="AAC66858.1"/>
    <property type="molecule type" value="Genomic_DNA"/>
</dbReference>
<dbReference type="EMBL" id="U78193">
    <property type="protein sequence ID" value="AAB36828.1"/>
    <property type="molecule type" value="Genomic_DNA"/>
</dbReference>
<dbReference type="PIR" id="C70160">
    <property type="entry name" value="C70160"/>
</dbReference>
<dbReference type="RefSeq" id="NP_212618.1">
    <property type="nucleotide sequence ID" value="NC_001318.1"/>
</dbReference>
<dbReference type="RefSeq" id="WP_002656551.1">
    <property type="nucleotide sequence ID" value="NC_001318.1"/>
</dbReference>
<dbReference type="PDB" id="8FMW">
    <property type="method" value="EM"/>
    <property type="resolution" value="2.86 A"/>
    <property type="chains" value="C=2-207"/>
</dbReference>
<dbReference type="PDBsum" id="8FMW"/>
<dbReference type="EMDB" id="EMD-29298"/>
<dbReference type="SMR" id="P94273"/>
<dbReference type="STRING" id="224326.BB_0484"/>
<dbReference type="PaxDb" id="224326-BB_0484"/>
<dbReference type="EnsemblBacteria" id="AAC66858">
    <property type="protein sequence ID" value="AAC66858"/>
    <property type="gene ID" value="BB_0484"/>
</dbReference>
<dbReference type="GeneID" id="56567919"/>
<dbReference type="KEGG" id="bbu:BB_0484"/>
<dbReference type="PATRIC" id="fig|224326.49.peg.875"/>
<dbReference type="HOGENOM" id="CLU_058591_0_2_12"/>
<dbReference type="OrthoDB" id="9806396at2"/>
<dbReference type="Proteomes" id="UP000001807">
    <property type="component" value="Chromosome"/>
</dbReference>
<dbReference type="GO" id="GO:0022627">
    <property type="term" value="C:cytosolic small ribosomal subunit"/>
    <property type="evidence" value="ECO:0007669"/>
    <property type="project" value="TreeGrafter"/>
</dbReference>
<dbReference type="GO" id="GO:0003729">
    <property type="term" value="F:mRNA binding"/>
    <property type="evidence" value="ECO:0007669"/>
    <property type="project" value="UniProtKB-UniRule"/>
</dbReference>
<dbReference type="GO" id="GO:0019843">
    <property type="term" value="F:rRNA binding"/>
    <property type="evidence" value="ECO:0007669"/>
    <property type="project" value="UniProtKB-UniRule"/>
</dbReference>
<dbReference type="GO" id="GO:0003735">
    <property type="term" value="F:structural constituent of ribosome"/>
    <property type="evidence" value="ECO:0007669"/>
    <property type="project" value="InterPro"/>
</dbReference>
<dbReference type="GO" id="GO:0006412">
    <property type="term" value="P:translation"/>
    <property type="evidence" value="ECO:0007669"/>
    <property type="project" value="UniProtKB-UniRule"/>
</dbReference>
<dbReference type="CDD" id="cd02412">
    <property type="entry name" value="KH-II_30S_S3"/>
    <property type="match status" value="1"/>
</dbReference>
<dbReference type="FunFam" id="3.30.300.20:FF:000001">
    <property type="entry name" value="30S ribosomal protein S3"/>
    <property type="match status" value="1"/>
</dbReference>
<dbReference type="Gene3D" id="3.30.300.20">
    <property type="match status" value="1"/>
</dbReference>
<dbReference type="Gene3D" id="3.30.1140.32">
    <property type="entry name" value="Ribosomal protein S3, C-terminal domain"/>
    <property type="match status" value="1"/>
</dbReference>
<dbReference type="HAMAP" id="MF_01309_B">
    <property type="entry name" value="Ribosomal_uS3_B"/>
    <property type="match status" value="1"/>
</dbReference>
<dbReference type="InterPro" id="IPR004087">
    <property type="entry name" value="KH_dom"/>
</dbReference>
<dbReference type="InterPro" id="IPR015946">
    <property type="entry name" value="KH_dom-like_a/b"/>
</dbReference>
<dbReference type="InterPro" id="IPR004044">
    <property type="entry name" value="KH_dom_type_2"/>
</dbReference>
<dbReference type="InterPro" id="IPR009019">
    <property type="entry name" value="KH_sf_prok-type"/>
</dbReference>
<dbReference type="InterPro" id="IPR036419">
    <property type="entry name" value="Ribosomal_S3_C_sf"/>
</dbReference>
<dbReference type="InterPro" id="IPR005704">
    <property type="entry name" value="Ribosomal_uS3_bac-typ"/>
</dbReference>
<dbReference type="InterPro" id="IPR001351">
    <property type="entry name" value="Ribosomal_uS3_C"/>
</dbReference>
<dbReference type="InterPro" id="IPR018280">
    <property type="entry name" value="Ribosomal_uS3_CS"/>
</dbReference>
<dbReference type="NCBIfam" id="TIGR01009">
    <property type="entry name" value="rpsC_bact"/>
    <property type="match status" value="1"/>
</dbReference>
<dbReference type="PANTHER" id="PTHR11760">
    <property type="entry name" value="30S/40S RIBOSOMAL PROTEIN S3"/>
    <property type="match status" value="1"/>
</dbReference>
<dbReference type="PANTHER" id="PTHR11760:SF19">
    <property type="entry name" value="SMALL RIBOSOMAL SUBUNIT PROTEIN US3C"/>
    <property type="match status" value="1"/>
</dbReference>
<dbReference type="Pfam" id="PF07650">
    <property type="entry name" value="KH_2"/>
    <property type="match status" value="1"/>
</dbReference>
<dbReference type="Pfam" id="PF00189">
    <property type="entry name" value="Ribosomal_S3_C"/>
    <property type="match status" value="1"/>
</dbReference>
<dbReference type="SMART" id="SM00322">
    <property type="entry name" value="KH"/>
    <property type="match status" value="1"/>
</dbReference>
<dbReference type="SUPFAM" id="SSF54814">
    <property type="entry name" value="Prokaryotic type KH domain (KH-domain type II)"/>
    <property type="match status" value="1"/>
</dbReference>
<dbReference type="SUPFAM" id="SSF54821">
    <property type="entry name" value="Ribosomal protein S3 C-terminal domain"/>
    <property type="match status" value="1"/>
</dbReference>
<dbReference type="PROSITE" id="PS50823">
    <property type="entry name" value="KH_TYPE_2"/>
    <property type="match status" value="1"/>
</dbReference>
<dbReference type="PROSITE" id="PS00548">
    <property type="entry name" value="RIBOSOMAL_S3"/>
    <property type="match status" value="1"/>
</dbReference>
<feature type="chain" id="PRO_0000130080" description="Small ribosomal subunit protein uS3">
    <location>
        <begin position="1"/>
        <end position="293"/>
    </location>
</feature>
<feature type="domain" description="KH type-2" evidence="1">
    <location>
        <begin position="39"/>
        <end position="110"/>
    </location>
</feature>
<feature type="sequence conflict" description="In Ref. 2; AAB36828." evidence="2" ref="2">
    <original>A</original>
    <variation>R</variation>
    <location>
        <position position="31"/>
    </location>
</feature>
<name>RS3_BORBU</name>